<dbReference type="EMBL" id="BA000019">
    <property type="protein sequence ID" value="BAB74021.1"/>
    <property type="molecule type" value="Genomic_DNA"/>
</dbReference>
<dbReference type="PIR" id="AC2096">
    <property type="entry name" value="AC2096"/>
</dbReference>
<dbReference type="SMR" id="Q8YUL9"/>
<dbReference type="STRING" id="103690.gene:10494351"/>
<dbReference type="KEGG" id="ana:alr2322"/>
<dbReference type="eggNOG" id="COG0542">
    <property type="taxonomic scope" value="Bacteria"/>
</dbReference>
<dbReference type="OrthoDB" id="438311at2"/>
<dbReference type="Proteomes" id="UP000002483">
    <property type="component" value="Chromosome"/>
</dbReference>
<dbReference type="GO" id="GO:0005737">
    <property type="term" value="C:cytoplasm"/>
    <property type="evidence" value="ECO:0007669"/>
    <property type="project" value="UniProtKB-SubCell"/>
</dbReference>
<dbReference type="GO" id="GO:0005524">
    <property type="term" value="F:ATP binding"/>
    <property type="evidence" value="ECO:0007669"/>
    <property type="project" value="UniProtKB-KW"/>
</dbReference>
<dbReference type="GO" id="GO:0016887">
    <property type="term" value="F:ATP hydrolysis activity"/>
    <property type="evidence" value="ECO:0007669"/>
    <property type="project" value="InterPro"/>
</dbReference>
<dbReference type="GO" id="GO:0034605">
    <property type="term" value="P:cellular response to heat"/>
    <property type="evidence" value="ECO:0007669"/>
    <property type="project" value="TreeGrafter"/>
</dbReference>
<dbReference type="GO" id="GO:0042026">
    <property type="term" value="P:protein refolding"/>
    <property type="evidence" value="ECO:0007669"/>
    <property type="project" value="InterPro"/>
</dbReference>
<dbReference type="CDD" id="cd00009">
    <property type="entry name" value="AAA"/>
    <property type="match status" value="1"/>
</dbReference>
<dbReference type="CDD" id="cd19499">
    <property type="entry name" value="RecA-like_ClpB_Hsp104-like"/>
    <property type="match status" value="1"/>
</dbReference>
<dbReference type="FunFam" id="1.10.8.60:FF:000017">
    <property type="entry name" value="ATP-dependent chaperone ClpB"/>
    <property type="match status" value="1"/>
</dbReference>
<dbReference type="FunFam" id="3.40.50.300:FF:000120">
    <property type="entry name" value="ATP-dependent chaperone ClpB"/>
    <property type="match status" value="1"/>
</dbReference>
<dbReference type="FunFam" id="3.40.50.300:FF:000025">
    <property type="entry name" value="ATP-dependent Clp protease subunit"/>
    <property type="match status" value="1"/>
</dbReference>
<dbReference type="FunFam" id="3.40.50.300:FF:000010">
    <property type="entry name" value="Chaperone clpB 1, putative"/>
    <property type="match status" value="1"/>
</dbReference>
<dbReference type="Gene3D" id="1.10.8.60">
    <property type="match status" value="1"/>
</dbReference>
<dbReference type="Gene3D" id="1.10.1780.10">
    <property type="entry name" value="Clp, N-terminal domain"/>
    <property type="match status" value="1"/>
</dbReference>
<dbReference type="Gene3D" id="3.40.50.300">
    <property type="entry name" value="P-loop containing nucleotide triphosphate hydrolases"/>
    <property type="match status" value="3"/>
</dbReference>
<dbReference type="InterPro" id="IPR003593">
    <property type="entry name" value="AAA+_ATPase"/>
</dbReference>
<dbReference type="InterPro" id="IPR003959">
    <property type="entry name" value="ATPase_AAA_core"/>
</dbReference>
<dbReference type="InterPro" id="IPR017730">
    <property type="entry name" value="Chaperonin_ClpB"/>
</dbReference>
<dbReference type="InterPro" id="IPR019489">
    <property type="entry name" value="Clp_ATPase_C"/>
</dbReference>
<dbReference type="InterPro" id="IPR036628">
    <property type="entry name" value="Clp_N_dom_sf"/>
</dbReference>
<dbReference type="InterPro" id="IPR004176">
    <property type="entry name" value="Clp_R_dom"/>
</dbReference>
<dbReference type="InterPro" id="IPR001270">
    <property type="entry name" value="ClpA/B"/>
</dbReference>
<dbReference type="InterPro" id="IPR018368">
    <property type="entry name" value="ClpA/B_CS1"/>
</dbReference>
<dbReference type="InterPro" id="IPR028299">
    <property type="entry name" value="ClpA/B_CS2"/>
</dbReference>
<dbReference type="InterPro" id="IPR041546">
    <property type="entry name" value="ClpA/ClpB_AAA_lid"/>
</dbReference>
<dbReference type="InterPro" id="IPR050130">
    <property type="entry name" value="ClpA_ClpB"/>
</dbReference>
<dbReference type="InterPro" id="IPR027417">
    <property type="entry name" value="P-loop_NTPase"/>
</dbReference>
<dbReference type="NCBIfam" id="TIGR03346">
    <property type="entry name" value="chaperone_ClpB"/>
    <property type="match status" value="1"/>
</dbReference>
<dbReference type="PANTHER" id="PTHR11638">
    <property type="entry name" value="ATP-DEPENDENT CLP PROTEASE"/>
    <property type="match status" value="1"/>
</dbReference>
<dbReference type="PANTHER" id="PTHR11638:SF18">
    <property type="entry name" value="HEAT SHOCK PROTEIN 104"/>
    <property type="match status" value="1"/>
</dbReference>
<dbReference type="Pfam" id="PF00004">
    <property type="entry name" value="AAA"/>
    <property type="match status" value="1"/>
</dbReference>
<dbReference type="Pfam" id="PF07724">
    <property type="entry name" value="AAA_2"/>
    <property type="match status" value="1"/>
</dbReference>
<dbReference type="Pfam" id="PF17871">
    <property type="entry name" value="AAA_lid_9"/>
    <property type="match status" value="1"/>
</dbReference>
<dbReference type="Pfam" id="PF02861">
    <property type="entry name" value="Clp_N"/>
    <property type="match status" value="2"/>
</dbReference>
<dbReference type="Pfam" id="PF10431">
    <property type="entry name" value="ClpB_D2-small"/>
    <property type="match status" value="1"/>
</dbReference>
<dbReference type="PRINTS" id="PR00300">
    <property type="entry name" value="CLPPROTEASEA"/>
</dbReference>
<dbReference type="SMART" id="SM00382">
    <property type="entry name" value="AAA"/>
    <property type="match status" value="2"/>
</dbReference>
<dbReference type="SMART" id="SM01086">
    <property type="entry name" value="ClpB_D2-small"/>
    <property type="match status" value="1"/>
</dbReference>
<dbReference type="SUPFAM" id="SSF81923">
    <property type="entry name" value="Double Clp-N motif"/>
    <property type="match status" value="1"/>
</dbReference>
<dbReference type="SUPFAM" id="SSF52540">
    <property type="entry name" value="P-loop containing nucleoside triphosphate hydrolases"/>
    <property type="match status" value="2"/>
</dbReference>
<dbReference type="PROSITE" id="PS51903">
    <property type="entry name" value="CLP_R"/>
    <property type="match status" value="1"/>
</dbReference>
<dbReference type="PROSITE" id="PS00870">
    <property type="entry name" value="CLPAB_1"/>
    <property type="match status" value="1"/>
</dbReference>
<dbReference type="PROSITE" id="PS00871">
    <property type="entry name" value="CLPAB_2"/>
    <property type="match status" value="1"/>
</dbReference>
<name>CLPB1_NOSS1</name>
<comment type="function">
    <text evidence="1">Part of a stress-induced multi-chaperone system, it is involved in the recovery of the cell from heat-induced damage, in cooperation with DnaK, DnaJ and GrpE. Acts before DnaK, in the processing of protein aggregates. Protein binding stimulates the ATPase activity; ATP hydrolysis unfolds the denatured protein aggregates, which probably helps expose new hydrophobic binding sites on the surface of ClpB-bound aggregates, contributing to the solubilization and refolding of denatured protein aggregates by DnaK (By similarity).</text>
</comment>
<comment type="subunit">
    <text evidence="1">Homohexamer. The oligomerization is ATP-dependent (By similarity).</text>
</comment>
<comment type="subcellular location">
    <subcellularLocation>
        <location evidence="3">Cytoplasm</location>
    </subcellularLocation>
</comment>
<comment type="domain">
    <text evidence="1">The Clp repeat (R) domain probably functions as a substrate-discriminating domain, recruiting aggregated proteins to the ClpB hexamer and/or stabilizing bound proteins. The NBD2 domain is responsible for oligomerization, whereas the NBD1 domain stabilizes the hexamer probably in an ATP-dependent manner. The movement of the coiled-coil domain is essential for ClpB ability to rescue proteins from an aggregated state, probably by pulling apart large aggregated proteins, which are bound between the coiled-coils motifs of adjacent ClpB subunits in the functional hexamer (By similarity).</text>
</comment>
<comment type="similarity">
    <text evidence="3">Belongs to the ClpA/ClpB family.</text>
</comment>
<keyword id="KW-0067">ATP-binding</keyword>
<keyword id="KW-0143">Chaperone</keyword>
<keyword id="KW-0175">Coiled coil</keyword>
<keyword id="KW-0963">Cytoplasm</keyword>
<keyword id="KW-0547">Nucleotide-binding</keyword>
<keyword id="KW-1185">Reference proteome</keyword>
<keyword id="KW-0677">Repeat</keyword>
<keyword id="KW-0346">Stress response</keyword>
<protein>
    <recommendedName>
        <fullName>Chaperone protein ClpB 1</fullName>
    </recommendedName>
</protein>
<gene>
    <name type="primary">clpB1</name>
    <name type="ordered locus">alr2322</name>
</gene>
<feature type="chain" id="PRO_0000191085" description="Chaperone protein ClpB 1">
    <location>
        <begin position="1"/>
        <end position="880"/>
    </location>
</feature>
<feature type="domain" description="Clp R" evidence="2">
    <location>
        <begin position="6"/>
        <end position="148"/>
    </location>
</feature>
<feature type="region of interest" description="Repeat 1" evidence="2">
    <location>
        <begin position="9"/>
        <end position="74"/>
    </location>
</feature>
<feature type="region of interest" description="Repeat 2" evidence="2">
    <location>
        <begin position="85"/>
        <end position="148"/>
    </location>
</feature>
<feature type="region of interest" description="NBD1" evidence="1">
    <location>
        <begin position="161"/>
        <end position="343"/>
    </location>
</feature>
<feature type="region of interest" description="Linker" evidence="1">
    <location>
        <begin position="344"/>
        <end position="554"/>
    </location>
</feature>
<feature type="region of interest" description="NBD2" evidence="1">
    <location>
        <begin position="564"/>
        <end position="775"/>
    </location>
</feature>
<feature type="region of interest" description="C-terminal" evidence="1">
    <location>
        <begin position="776"/>
        <end position="880"/>
    </location>
</feature>
<feature type="coiled-coil region" evidence="1">
    <location>
        <begin position="394"/>
        <end position="530"/>
    </location>
</feature>
<feature type="binding site" evidence="1">
    <location>
        <begin position="208"/>
        <end position="215"/>
    </location>
    <ligand>
        <name>ATP</name>
        <dbReference type="ChEBI" id="CHEBI:30616"/>
        <label>1</label>
    </ligand>
</feature>
<feature type="binding site" evidence="1">
    <location>
        <begin position="614"/>
        <end position="621"/>
    </location>
    <ligand>
        <name>ATP</name>
        <dbReference type="ChEBI" id="CHEBI:30616"/>
        <label>2</label>
    </ligand>
</feature>
<organism>
    <name type="scientific">Nostoc sp. (strain PCC 7120 / SAG 25.82 / UTEX 2576)</name>
    <dbReference type="NCBI Taxonomy" id="103690"/>
    <lineage>
        <taxon>Bacteria</taxon>
        <taxon>Bacillati</taxon>
        <taxon>Cyanobacteriota</taxon>
        <taxon>Cyanophyceae</taxon>
        <taxon>Nostocales</taxon>
        <taxon>Nostocaceae</taxon>
        <taxon>Nostoc</taxon>
    </lineage>
</organism>
<proteinExistence type="inferred from homology"/>
<reference key="1">
    <citation type="journal article" date="2001" name="DNA Res.">
        <title>Complete genomic sequence of the filamentous nitrogen-fixing cyanobacterium Anabaena sp. strain PCC 7120.</title>
        <authorList>
            <person name="Kaneko T."/>
            <person name="Nakamura Y."/>
            <person name="Wolk C.P."/>
            <person name="Kuritz T."/>
            <person name="Sasamoto S."/>
            <person name="Watanabe A."/>
            <person name="Iriguchi M."/>
            <person name="Ishikawa A."/>
            <person name="Kawashima K."/>
            <person name="Kimura T."/>
            <person name="Kishida Y."/>
            <person name="Kohara M."/>
            <person name="Matsumoto M."/>
            <person name="Matsuno A."/>
            <person name="Muraki A."/>
            <person name="Nakazaki N."/>
            <person name="Shimpo S."/>
            <person name="Sugimoto M."/>
            <person name="Takazawa M."/>
            <person name="Yamada M."/>
            <person name="Yasuda M."/>
            <person name="Tabata S."/>
        </authorList>
    </citation>
    <scope>NUCLEOTIDE SEQUENCE [LARGE SCALE GENOMIC DNA]</scope>
    <source>
        <strain>PCC 7120 / SAG 25.82 / UTEX 2576</strain>
    </source>
</reference>
<accession>Q8YUL9</accession>
<sequence length="880" mass="99047">MQPTDPNKFTDKAWEVIVKSQDIVRAYQQQQLDVEHLILALIEDPTSLAVRILGRAEIDPIRLQQQLEAFTQRQTKVGKSDQLYLGRSLDVMLDRAEEIRERMKDGYISVEHMLLAFVDDERVGRKVLKGFNVDSAKIEASIKAVRGSQKVTDQNPESRYEALQKFGRDLTEQAKSGKLDPVIGRDDEIRRVIQVLSRRSKNNPVLIGEPGVGKTAIAEALAQRIVNGDVPESLKNRQLISLDIGSLIAGAKYRGEFEDRLKAVLREVTESNGNIVLFIDELHTVVGTGSNQQGAMDAGNLLKPMLARGELRCIGATTLDEFRKFIEKDAALERRFQQVYVDQPSVENTISILRGLKERYEVHHNVKISDSALVAAATLSARYIADRFLPDKAIDLVDEAAAQLKMEITSKPADLEAIDRRLMQLEMEKLSLAGEEKVAAPTKERLQRIELEITNLTEKQQDLNNQWQGEKQVLEAISLLKKEEDALRVQIEQAERAYDLNKAAQLKYGKLEGVQRDREAKEAKLLELQSQGSTLLREQVTEADIAEIVAKWTGIPVNRLLESERQKLLQLESHLHQRVIGQQEAVEAVSAAIRRARAGMKDPNRPIGSFLFMGPTGVGKTELARALAQFLFDADDALVRLDMSEYMEKHSVSRLVGAPPGYVGYEEGGQLSEAVRRHPYSVVLLDEVEKAHPDVFNILLQVLDDGRITDSQGRTVDFRNTVIVMTSNIGSEHILDVSGDDTQYETMRNRVMDALRSHFRPEFLNRVDDTILFHALSRSEMSHIIRIQLKRVESLLRDQKISFEISPAACDFLVEKGYDPVYGARPLKRAIQREIENPLATKILENTFISGDTIYIDQDENGLSFTNKAPVKVSVTQITT</sequence>
<evidence type="ECO:0000250" key="1"/>
<evidence type="ECO:0000255" key="2">
    <source>
        <dbReference type="PROSITE-ProRule" id="PRU01251"/>
    </source>
</evidence>
<evidence type="ECO:0000305" key="3"/>